<reference key="1">
    <citation type="journal article" date="2003" name="Proc. Natl. Acad. Sci. U.S.A.">
        <title>Complete genome sequence of the Q-fever pathogen, Coxiella burnetii.</title>
        <authorList>
            <person name="Seshadri R."/>
            <person name="Paulsen I.T."/>
            <person name="Eisen J.A."/>
            <person name="Read T.D."/>
            <person name="Nelson K.E."/>
            <person name="Nelson W.C."/>
            <person name="Ward N.L."/>
            <person name="Tettelin H."/>
            <person name="Davidsen T.M."/>
            <person name="Beanan M.J."/>
            <person name="DeBoy R.T."/>
            <person name="Daugherty S.C."/>
            <person name="Brinkac L.M."/>
            <person name="Madupu R."/>
            <person name="Dodson R.J."/>
            <person name="Khouri H.M."/>
            <person name="Lee K.H."/>
            <person name="Carty H.A."/>
            <person name="Scanlan D."/>
            <person name="Heinzen R.A."/>
            <person name="Thompson H.A."/>
            <person name="Samuel J.E."/>
            <person name="Fraser C.M."/>
            <person name="Heidelberg J.F."/>
        </authorList>
    </citation>
    <scope>NUCLEOTIDE SEQUENCE [LARGE SCALE GENOMIC DNA]</scope>
    <source>
        <strain>RSA 493 / Nine Mile phase I</strain>
    </source>
</reference>
<name>Y2093_COXBU</name>
<dbReference type="EMBL" id="AE016828">
    <property type="protein sequence ID" value="AAO91577.2"/>
    <property type="molecule type" value="Genomic_DNA"/>
</dbReference>
<dbReference type="RefSeq" id="WP_010958648.1">
    <property type="nucleotide sequence ID" value="NZ_CDBG01000001.1"/>
</dbReference>
<dbReference type="SMR" id="Q83A18"/>
<dbReference type="STRING" id="227377.CBU_2093"/>
<dbReference type="EnsemblBacteria" id="AAO91577">
    <property type="protein sequence ID" value="AAO91577"/>
    <property type="gene ID" value="CBU_2093"/>
</dbReference>
<dbReference type="KEGG" id="cbu:CBU_2093"/>
<dbReference type="PATRIC" id="fig|227377.7.peg.2084"/>
<dbReference type="eggNOG" id="COG1678">
    <property type="taxonomic scope" value="Bacteria"/>
</dbReference>
<dbReference type="HOGENOM" id="CLU_057596_1_0_6"/>
<dbReference type="OrthoDB" id="9807486at2"/>
<dbReference type="Proteomes" id="UP000002671">
    <property type="component" value="Chromosome"/>
</dbReference>
<dbReference type="GO" id="GO:0005829">
    <property type="term" value="C:cytosol"/>
    <property type="evidence" value="ECO:0000318"/>
    <property type="project" value="GO_Central"/>
</dbReference>
<dbReference type="Gene3D" id="3.40.1740.10">
    <property type="entry name" value="VC0467-like"/>
    <property type="match status" value="1"/>
</dbReference>
<dbReference type="HAMAP" id="MF_00758">
    <property type="entry name" value="UPF0301"/>
    <property type="match status" value="1"/>
</dbReference>
<dbReference type="InterPro" id="IPR003774">
    <property type="entry name" value="AlgH-like"/>
</dbReference>
<dbReference type="NCBIfam" id="NF001266">
    <property type="entry name" value="PRK00228.1-1"/>
    <property type="match status" value="1"/>
</dbReference>
<dbReference type="PANTHER" id="PTHR30327">
    <property type="entry name" value="UNCHARACTERIZED PROTEIN YQGE"/>
    <property type="match status" value="1"/>
</dbReference>
<dbReference type="PANTHER" id="PTHR30327:SF1">
    <property type="entry name" value="UPF0301 PROTEIN YQGE"/>
    <property type="match status" value="1"/>
</dbReference>
<dbReference type="Pfam" id="PF02622">
    <property type="entry name" value="DUF179"/>
    <property type="match status" value="1"/>
</dbReference>
<dbReference type="SUPFAM" id="SSF143456">
    <property type="entry name" value="VC0467-like"/>
    <property type="match status" value="1"/>
</dbReference>
<sequence>MRLSGDPRILSVIMVKTNILSNHFLVAMPQLNDFTFTKAVIYVSQHDAKGALGIIINRPLALTLGKVLEHLNIEIAQPQIANHPVLMGGPIGQEHGFIVYEQESPQGAEILLSASKDMLDDIAKNKGPDDFLITLGYAGWEAGQLENEIARNDWLVVPFNRKILFETPLKSRWQKAAALIGVDINQLSGQIGHA</sequence>
<organism>
    <name type="scientific">Coxiella burnetii (strain RSA 493 / Nine Mile phase I)</name>
    <dbReference type="NCBI Taxonomy" id="227377"/>
    <lineage>
        <taxon>Bacteria</taxon>
        <taxon>Pseudomonadati</taxon>
        <taxon>Pseudomonadota</taxon>
        <taxon>Gammaproteobacteria</taxon>
        <taxon>Legionellales</taxon>
        <taxon>Coxiellaceae</taxon>
        <taxon>Coxiella</taxon>
    </lineage>
</organism>
<comment type="similarity">
    <text evidence="1">Belongs to the UPF0301 (AlgH) family.</text>
</comment>
<feature type="chain" id="PRO_0000214322" description="UPF0301 protein CBU_2093">
    <location>
        <begin position="1"/>
        <end position="194"/>
    </location>
</feature>
<accession>Q83A18</accession>
<gene>
    <name type="ordered locus">CBU_2093</name>
</gene>
<evidence type="ECO:0000255" key="1">
    <source>
        <dbReference type="HAMAP-Rule" id="MF_00758"/>
    </source>
</evidence>
<proteinExistence type="inferred from homology"/>
<keyword id="KW-1185">Reference proteome</keyword>
<protein>
    <recommendedName>
        <fullName evidence="1">UPF0301 protein CBU_2093</fullName>
    </recommendedName>
</protein>